<evidence type="ECO:0000255" key="1">
    <source>
        <dbReference type="HAMAP-Rule" id="MF_00969"/>
    </source>
</evidence>
<keyword id="KW-0067">ATP-binding</keyword>
<keyword id="KW-0963">Cytoplasm</keyword>
<keyword id="KW-0227">DNA damage</keyword>
<keyword id="KW-0234">DNA repair</keyword>
<keyword id="KW-0238">DNA-binding</keyword>
<keyword id="KW-0347">Helicase</keyword>
<keyword id="KW-0378">Hydrolase</keyword>
<keyword id="KW-0547">Nucleotide-binding</keyword>
<name>MFD_STAAM</name>
<reference key="1">
    <citation type="journal article" date="2001" name="Lancet">
        <title>Whole genome sequencing of meticillin-resistant Staphylococcus aureus.</title>
        <authorList>
            <person name="Kuroda M."/>
            <person name="Ohta T."/>
            <person name="Uchiyama I."/>
            <person name="Baba T."/>
            <person name="Yuzawa H."/>
            <person name="Kobayashi I."/>
            <person name="Cui L."/>
            <person name="Oguchi A."/>
            <person name="Aoki K."/>
            <person name="Nagai Y."/>
            <person name="Lian J.-Q."/>
            <person name="Ito T."/>
            <person name="Kanamori M."/>
            <person name="Matsumaru H."/>
            <person name="Maruyama A."/>
            <person name="Murakami H."/>
            <person name="Hosoyama A."/>
            <person name="Mizutani-Ui Y."/>
            <person name="Takahashi N.K."/>
            <person name="Sawano T."/>
            <person name="Inoue R."/>
            <person name="Kaito C."/>
            <person name="Sekimizu K."/>
            <person name="Hirakawa H."/>
            <person name="Kuhara S."/>
            <person name="Goto S."/>
            <person name="Yabuzaki J."/>
            <person name="Kanehisa M."/>
            <person name="Yamashita A."/>
            <person name="Oshima K."/>
            <person name="Furuya K."/>
            <person name="Yoshino C."/>
            <person name="Shiba T."/>
            <person name="Hattori M."/>
            <person name="Ogasawara N."/>
            <person name="Hayashi H."/>
            <person name="Hiramatsu K."/>
        </authorList>
    </citation>
    <scope>NUCLEOTIDE SEQUENCE [LARGE SCALE GENOMIC DNA]</scope>
    <source>
        <strain>Mu50 / ATCC 700699</strain>
    </source>
</reference>
<accession>Q99WA0</accession>
<sequence length="1168" mass="134302">MTILTTLIKEDNHFQDLNQVFGQANTLVTGLSPSAKVTMIAEKYAQSNQQLLLITNNLYQADKLETDLLQFIDAEELYKYPVQDIMTEEFSTQSPQLMSERIRTLTALAQGKKGLFIVPLNGLKKWLTPVEMWQNHQMTLRVGEDIDVDQFLNKLVNMGYKRESVVSHIGEFSLRGGIIDIFPLIGEPIRIELFDTEIDSIRDFDVETQRSKDNIEEVDITTASDYIITEEVIRHLKEELKTAYENTRPKIDKSVRNDLKETYESFKLFESTYFDHQILRRLVAFMYETPSTIIEYFQKDAIIAVDEFNRIKETEESLTVESDSFISNIIESGNGFIGQSFIKYDDFETLIEGYPVTYFSLFATTMPIKLNHIIKFSCKPVQQFYGQYDIMRSEFQRYVNQNYHIVVLVETETKVERMQAMLSEMHIPSITKLHRSMSSGQAVIIEGSLSEGFELPDMGLVVITERELFKSKQKKQRKRTKAISNAEKIKSYQDLNVGDYIVHVHHGVGRYLGVETLEVGQTHRDYIKLQYKGTDQLFVPVDQMDQVQKYVASEDKTPKLNKLGGSEWKKTKAKVQQSVEDIAEELIDLYKEREMAEGYQYGEDTAEQTTFELDFPYELTPDQAKSIDEIKDDMQKSRPMDRLLCGDVGYGKTEVAVRAAFKAVMEGKQVAFLVPTTILAQQHYETLIERMQDFPVEIQLMSRFRTPKEIKQTKEGLKTGFVDIVVGTHKLLSKDIQYKDLGLLIVDEEQRFGVRHKERIKTLKHNVDVLTLTATPIPRTLHMSMLGVRDLSVIETPPENRFPVQTYVLEQNMSFIKEALERELSRDGQVFYLYNKVQSIYEKREQLQMLMPDANIAVAHGQMTERDLEETMLSFINNEYDILVTTTIIETGVDVPNANTLIIEDADRFGLSQLYQLRGRVGRSSRIGYAYFLHPANKVLTETAEDRLQAIKEFTELGSGFKIAMRDLNIRGAGNLLGKQQHGFIDTVGFDLYSQMLEEAVNEKRGIKEPESEVPEVEVDLNLDAYLPTEYIANEQAKIEIYKKLRKTETFDQIIDIKDELIDRFNDYPVEVARLLDIVEIKVHALHSGITLIKDKGKIIDIHLSVKATENIDGEVLFKATQPLGRTMKVGVQNNAMTITLTKQNQWLDSLKFLVKCIEESMRISDEA</sequence>
<comment type="function">
    <text evidence="1">Couples transcription and DNA repair by recognizing RNA polymerase (RNAP) stalled at DNA lesions. Mediates ATP-dependent release of RNAP and its truncated transcript from the DNA, and recruitment of nucleotide excision repair machinery to the damaged site.</text>
</comment>
<comment type="subcellular location">
    <subcellularLocation>
        <location evidence="1">Cytoplasm</location>
    </subcellularLocation>
</comment>
<comment type="similarity">
    <text evidence="1">In the N-terminal section; belongs to the UvrB family.</text>
</comment>
<comment type="similarity">
    <text evidence="1">In the C-terminal section; belongs to the helicase family. RecG subfamily.</text>
</comment>
<dbReference type="EC" id="3.6.4.-" evidence="1"/>
<dbReference type="EMBL" id="BA000017">
    <property type="protein sequence ID" value="BAB56665.1"/>
    <property type="molecule type" value="Genomic_DNA"/>
</dbReference>
<dbReference type="RefSeq" id="WP_000154218.1">
    <property type="nucleotide sequence ID" value="NC_002758.2"/>
</dbReference>
<dbReference type="SMR" id="Q99WA0"/>
<dbReference type="KEGG" id="sav:SAV0503"/>
<dbReference type="HOGENOM" id="CLU_005122_1_3_9"/>
<dbReference type="PhylomeDB" id="Q99WA0"/>
<dbReference type="Proteomes" id="UP000002481">
    <property type="component" value="Chromosome"/>
</dbReference>
<dbReference type="GO" id="GO:0005737">
    <property type="term" value="C:cytoplasm"/>
    <property type="evidence" value="ECO:0007669"/>
    <property type="project" value="UniProtKB-SubCell"/>
</dbReference>
<dbReference type="GO" id="GO:0005524">
    <property type="term" value="F:ATP binding"/>
    <property type="evidence" value="ECO:0007669"/>
    <property type="project" value="UniProtKB-UniRule"/>
</dbReference>
<dbReference type="GO" id="GO:0003684">
    <property type="term" value="F:damaged DNA binding"/>
    <property type="evidence" value="ECO:0007669"/>
    <property type="project" value="InterPro"/>
</dbReference>
<dbReference type="GO" id="GO:0003678">
    <property type="term" value="F:DNA helicase activity"/>
    <property type="evidence" value="ECO:0007669"/>
    <property type="project" value="TreeGrafter"/>
</dbReference>
<dbReference type="GO" id="GO:0016787">
    <property type="term" value="F:hydrolase activity"/>
    <property type="evidence" value="ECO:0007669"/>
    <property type="project" value="UniProtKB-KW"/>
</dbReference>
<dbReference type="GO" id="GO:0006355">
    <property type="term" value="P:regulation of DNA-templated transcription"/>
    <property type="evidence" value="ECO:0007669"/>
    <property type="project" value="UniProtKB-UniRule"/>
</dbReference>
<dbReference type="GO" id="GO:0000716">
    <property type="term" value="P:transcription-coupled nucleotide-excision repair, DNA damage recognition"/>
    <property type="evidence" value="ECO:0007669"/>
    <property type="project" value="UniProtKB-UniRule"/>
</dbReference>
<dbReference type="CDD" id="cd17991">
    <property type="entry name" value="DEXHc_TRCF"/>
    <property type="match status" value="1"/>
</dbReference>
<dbReference type="FunFam" id="3.40.50.300:FF:000546">
    <property type="entry name" value="Transcription-repair-coupling factor"/>
    <property type="match status" value="1"/>
</dbReference>
<dbReference type="Gene3D" id="2.40.10.170">
    <property type="match status" value="1"/>
</dbReference>
<dbReference type="Gene3D" id="3.40.50.11140">
    <property type="match status" value="1"/>
</dbReference>
<dbReference type="Gene3D" id="3.40.50.11180">
    <property type="match status" value="1"/>
</dbReference>
<dbReference type="Gene3D" id="3.40.50.300">
    <property type="entry name" value="P-loop containing nucleotide triphosphate hydrolases"/>
    <property type="match status" value="2"/>
</dbReference>
<dbReference type="Gene3D" id="3.30.2060.10">
    <property type="entry name" value="Penicillin-binding protein 1b domain"/>
    <property type="match status" value="1"/>
</dbReference>
<dbReference type="Gene3D" id="3.90.1150.50">
    <property type="entry name" value="Transcription-repair-coupling factor, D7 domain"/>
    <property type="match status" value="1"/>
</dbReference>
<dbReference type="HAMAP" id="MF_00969">
    <property type="entry name" value="TRCF"/>
    <property type="match status" value="1"/>
</dbReference>
<dbReference type="InterPro" id="IPR003711">
    <property type="entry name" value="CarD-like/TRCF_RID"/>
</dbReference>
<dbReference type="InterPro" id="IPR036101">
    <property type="entry name" value="CarD-like/TRCF_RID_sf"/>
</dbReference>
<dbReference type="InterPro" id="IPR011545">
    <property type="entry name" value="DEAD/DEAH_box_helicase_dom"/>
</dbReference>
<dbReference type="InterPro" id="IPR014001">
    <property type="entry name" value="Helicase_ATP-bd"/>
</dbReference>
<dbReference type="InterPro" id="IPR001650">
    <property type="entry name" value="Helicase_C-like"/>
</dbReference>
<dbReference type="InterPro" id="IPR004576">
    <property type="entry name" value="Mfd"/>
</dbReference>
<dbReference type="InterPro" id="IPR048635">
    <property type="entry name" value="MFD_D3"/>
</dbReference>
<dbReference type="InterPro" id="IPR027417">
    <property type="entry name" value="P-loop_NTPase"/>
</dbReference>
<dbReference type="InterPro" id="IPR047112">
    <property type="entry name" value="RecG/Mfd"/>
</dbReference>
<dbReference type="InterPro" id="IPR037235">
    <property type="entry name" value="TRCF-like_C_D7"/>
</dbReference>
<dbReference type="InterPro" id="IPR005118">
    <property type="entry name" value="TRCF_C"/>
</dbReference>
<dbReference type="InterPro" id="IPR041471">
    <property type="entry name" value="UvrB_inter"/>
</dbReference>
<dbReference type="NCBIfam" id="TIGR00580">
    <property type="entry name" value="mfd"/>
    <property type="match status" value="1"/>
</dbReference>
<dbReference type="PANTHER" id="PTHR47964">
    <property type="entry name" value="ATP-DEPENDENT DNA HELICASE HOMOLOG RECG, CHLOROPLASTIC"/>
    <property type="match status" value="1"/>
</dbReference>
<dbReference type="PANTHER" id="PTHR47964:SF1">
    <property type="entry name" value="ATP-DEPENDENT DNA HELICASE HOMOLOG RECG, CHLOROPLASTIC"/>
    <property type="match status" value="1"/>
</dbReference>
<dbReference type="Pfam" id="PF02559">
    <property type="entry name" value="CarD_TRCF_RID"/>
    <property type="match status" value="1"/>
</dbReference>
<dbReference type="Pfam" id="PF00270">
    <property type="entry name" value="DEAD"/>
    <property type="match status" value="1"/>
</dbReference>
<dbReference type="Pfam" id="PF00271">
    <property type="entry name" value="Helicase_C"/>
    <property type="match status" value="1"/>
</dbReference>
<dbReference type="Pfam" id="PF21132">
    <property type="entry name" value="MFD_D3"/>
    <property type="match status" value="1"/>
</dbReference>
<dbReference type="Pfam" id="PF03461">
    <property type="entry name" value="TRCF"/>
    <property type="match status" value="1"/>
</dbReference>
<dbReference type="Pfam" id="PF17757">
    <property type="entry name" value="UvrB_inter"/>
    <property type="match status" value="1"/>
</dbReference>
<dbReference type="SMART" id="SM01058">
    <property type="entry name" value="CarD_TRCF"/>
    <property type="match status" value="1"/>
</dbReference>
<dbReference type="SMART" id="SM00487">
    <property type="entry name" value="DEXDc"/>
    <property type="match status" value="1"/>
</dbReference>
<dbReference type="SMART" id="SM00490">
    <property type="entry name" value="HELICc"/>
    <property type="match status" value="1"/>
</dbReference>
<dbReference type="SMART" id="SM00982">
    <property type="entry name" value="TRCF"/>
    <property type="match status" value="1"/>
</dbReference>
<dbReference type="SUPFAM" id="SSF141259">
    <property type="entry name" value="CarD-like"/>
    <property type="match status" value="1"/>
</dbReference>
<dbReference type="SUPFAM" id="SSF52540">
    <property type="entry name" value="P-loop containing nucleoside triphosphate hydrolases"/>
    <property type="match status" value="4"/>
</dbReference>
<dbReference type="SUPFAM" id="SSF143517">
    <property type="entry name" value="TRCF domain-like"/>
    <property type="match status" value="1"/>
</dbReference>
<dbReference type="PROSITE" id="PS51192">
    <property type="entry name" value="HELICASE_ATP_BIND_1"/>
    <property type="match status" value="1"/>
</dbReference>
<dbReference type="PROSITE" id="PS51194">
    <property type="entry name" value="HELICASE_CTER"/>
    <property type="match status" value="1"/>
</dbReference>
<organism>
    <name type="scientific">Staphylococcus aureus (strain Mu50 / ATCC 700699)</name>
    <dbReference type="NCBI Taxonomy" id="158878"/>
    <lineage>
        <taxon>Bacteria</taxon>
        <taxon>Bacillati</taxon>
        <taxon>Bacillota</taxon>
        <taxon>Bacilli</taxon>
        <taxon>Bacillales</taxon>
        <taxon>Staphylococcaceae</taxon>
        <taxon>Staphylococcus</taxon>
    </lineage>
</organism>
<proteinExistence type="inferred from homology"/>
<protein>
    <recommendedName>
        <fullName evidence="1">Transcription-repair-coupling factor</fullName>
        <shortName evidence="1">TRCF</shortName>
        <ecNumber evidence="1">3.6.4.-</ecNumber>
    </recommendedName>
</protein>
<gene>
    <name evidence="1" type="primary">mfd</name>
    <name type="ordered locus">SAV0503</name>
</gene>
<feature type="chain" id="PRO_0000282671" description="Transcription-repair-coupling factor">
    <location>
        <begin position="1"/>
        <end position="1168"/>
    </location>
</feature>
<feature type="domain" description="Helicase ATP-binding" evidence="1">
    <location>
        <begin position="633"/>
        <end position="794"/>
    </location>
</feature>
<feature type="domain" description="Helicase C-terminal" evidence="1">
    <location>
        <begin position="808"/>
        <end position="969"/>
    </location>
</feature>
<feature type="short sequence motif" description="DEEQ box">
    <location>
        <begin position="747"/>
        <end position="750"/>
    </location>
</feature>
<feature type="binding site" evidence="1">
    <location>
        <begin position="646"/>
        <end position="653"/>
    </location>
    <ligand>
        <name>ATP</name>
        <dbReference type="ChEBI" id="CHEBI:30616"/>
    </ligand>
</feature>